<organism>
    <name type="scientific">Bacillus subtilis (strain 168)</name>
    <dbReference type="NCBI Taxonomy" id="224308"/>
    <lineage>
        <taxon>Bacteria</taxon>
        <taxon>Bacillati</taxon>
        <taxon>Bacillota</taxon>
        <taxon>Bacilli</taxon>
        <taxon>Bacillales</taxon>
        <taxon>Bacillaceae</taxon>
        <taxon>Bacillus</taxon>
    </lineage>
</organism>
<accession>O31707</accession>
<accession>Q7BVS1</accession>
<feature type="chain" id="PRO_0000360202" description="Uncharacterized ABC transporter ATP-binding protein YknU">
    <location>
        <begin position="1"/>
        <end position="585"/>
    </location>
</feature>
<feature type="transmembrane region" description="Helical" evidence="3">
    <location>
        <begin position="18"/>
        <end position="38"/>
    </location>
</feature>
<feature type="transmembrane region" description="Helical" evidence="3">
    <location>
        <begin position="55"/>
        <end position="75"/>
    </location>
</feature>
<feature type="transmembrane region" description="Helical" evidence="3">
    <location>
        <begin position="128"/>
        <end position="148"/>
    </location>
</feature>
<feature type="transmembrane region" description="Helical" evidence="3">
    <location>
        <begin position="150"/>
        <end position="170"/>
    </location>
</feature>
<feature type="transmembrane region" description="Helical" evidence="3">
    <location>
        <begin position="238"/>
        <end position="258"/>
    </location>
</feature>
<feature type="transmembrane region" description="Helical" evidence="3">
    <location>
        <begin position="276"/>
        <end position="296"/>
    </location>
</feature>
<feature type="domain" description="ABC transmembrane type-1" evidence="3">
    <location>
        <begin position="18"/>
        <end position="301"/>
    </location>
</feature>
<feature type="domain" description="ABC transporter" evidence="2">
    <location>
        <begin position="335"/>
        <end position="570"/>
    </location>
</feature>
<feature type="binding site" evidence="2">
    <location>
        <begin position="369"/>
        <end position="376"/>
    </location>
    <ligand>
        <name>ATP</name>
        <dbReference type="ChEBI" id="CHEBI:30616"/>
    </ligand>
</feature>
<dbReference type="EMBL" id="AF012285">
    <property type="protein sequence ID" value="AAC24906.1"/>
    <property type="molecule type" value="Genomic_DNA"/>
</dbReference>
<dbReference type="EMBL" id="AL009126">
    <property type="protein sequence ID" value="CAB13305.1"/>
    <property type="molecule type" value="Genomic_DNA"/>
</dbReference>
<dbReference type="PIR" id="H69857">
    <property type="entry name" value="H69857"/>
</dbReference>
<dbReference type="RefSeq" id="NP_389315.1">
    <property type="nucleotide sequence ID" value="NC_000964.3"/>
</dbReference>
<dbReference type="RefSeq" id="WP_009967136.1">
    <property type="nucleotide sequence ID" value="NZ_OZ025638.1"/>
</dbReference>
<dbReference type="SMR" id="O31707"/>
<dbReference type="FunCoup" id="O31707">
    <property type="interactions" value="557"/>
</dbReference>
<dbReference type="STRING" id="224308.BSU14320"/>
<dbReference type="PaxDb" id="224308-BSU14320"/>
<dbReference type="EnsemblBacteria" id="CAB13305">
    <property type="protein sequence ID" value="CAB13305"/>
    <property type="gene ID" value="BSU_14320"/>
</dbReference>
<dbReference type="GeneID" id="938775"/>
<dbReference type="KEGG" id="bsu:BSU14320"/>
<dbReference type="PATRIC" id="fig|224308.179.peg.1562"/>
<dbReference type="eggNOG" id="COG1132">
    <property type="taxonomic scope" value="Bacteria"/>
</dbReference>
<dbReference type="InParanoid" id="O31707"/>
<dbReference type="OrthoDB" id="9770415at2"/>
<dbReference type="PhylomeDB" id="O31707"/>
<dbReference type="BioCyc" id="BSUB:BSU14320-MONOMER"/>
<dbReference type="Proteomes" id="UP000001570">
    <property type="component" value="Chromosome"/>
</dbReference>
<dbReference type="GO" id="GO:0005886">
    <property type="term" value="C:plasma membrane"/>
    <property type="evidence" value="ECO:0007669"/>
    <property type="project" value="UniProtKB-SubCell"/>
</dbReference>
<dbReference type="GO" id="GO:0140359">
    <property type="term" value="F:ABC-type transporter activity"/>
    <property type="evidence" value="ECO:0007669"/>
    <property type="project" value="InterPro"/>
</dbReference>
<dbReference type="GO" id="GO:0005524">
    <property type="term" value="F:ATP binding"/>
    <property type="evidence" value="ECO:0007669"/>
    <property type="project" value="UniProtKB-KW"/>
</dbReference>
<dbReference type="GO" id="GO:0016887">
    <property type="term" value="F:ATP hydrolysis activity"/>
    <property type="evidence" value="ECO:0007669"/>
    <property type="project" value="InterPro"/>
</dbReference>
<dbReference type="GO" id="GO:0034040">
    <property type="term" value="F:ATPase-coupled lipid transmembrane transporter activity"/>
    <property type="evidence" value="ECO:0000318"/>
    <property type="project" value="GO_Central"/>
</dbReference>
<dbReference type="GO" id="GO:0055085">
    <property type="term" value="P:transmembrane transport"/>
    <property type="evidence" value="ECO:0000318"/>
    <property type="project" value="GO_Central"/>
</dbReference>
<dbReference type="CDD" id="cd18542">
    <property type="entry name" value="ABC_6TM_YknU_like"/>
    <property type="match status" value="1"/>
</dbReference>
<dbReference type="FunFam" id="1.20.1560.10:FF:000232">
    <property type="entry name" value="Multidrug ABC transporter ATP-binding protein"/>
    <property type="match status" value="1"/>
</dbReference>
<dbReference type="FunFam" id="3.40.50.300:FF:000221">
    <property type="entry name" value="Multidrug ABC transporter ATP-binding protein"/>
    <property type="match status" value="1"/>
</dbReference>
<dbReference type="Gene3D" id="1.20.1560.10">
    <property type="entry name" value="ABC transporter type 1, transmembrane domain"/>
    <property type="match status" value="1"/>
</dbReference>
<dbReference type="Gene3D" id="3.40.50.300">
    <property type="entry name" value="P-loop containing nucleotide triphosphate hydrolases"/>
    <property type="match status" value="1"/>
</dbReference>
<dbReference type="InterPro" id="IPR003593">
    <property type="entry name" value="AAA+_ATPase"/>
</dbReference>
<dbReference type="InterPro" id="IPR011527">
    <property type="entry name" value="ABC1_TM_dom"/>
</dbReference>
<dbReference type="InterPro" id="IPR036640">
    <property type="entry name" value="ABC1_TM_sf"/>
</dbReference>
<dbReference type="InterPro" id="IPR003439">
    <property type="entry name" value="ABC_transporter-like_ATP-bd"/>
</dbReference>
<dbReference type="InterPro" id="IPR017871">
    <property type="entry name" value="ABC_transporter-like_CS"/>
</dbReference>
<dbReference type="InterPro" id="IPR027417">
    <property type="entry name" value="P-loop_NTPase"/>
</dbReference>
<dbReference type="InterPro" id="IPR039421">
    <property type="entry name" value="Type_1_exporter"/>
</dbReference>
<dbReference type="PANTHER" id="PTHR43394:SF1">
    <property type="entry name" value="ATP-BINDING CASSETTE SUB-FAMILY B MEMBER 10, MITOCHONDRIAL"/>
    <property type="match status" value="1"/>
</dbReference>
<dbReference type="PANTHER" id="PTHR43394">
    <property type="entry name" value="ATP-DEPENDENT PERMEASE MDL1, MITOCHONDRIAL"/>
    <property type="match status" value="1"/>
</dbReference>
<dbReference type="Pfam" id="PF00664">
    <property type="entry name" value="ABC_membrane"/>
    <property type="match status" value="1"/>
</dbReference>
<dbReference type="Pfam" id="PF00005">
    <property type="entry name" value="ABC_tran"/>
    <property type="match status" value="1"/>
</dbReference>
<dbReference type="SMART" id="SM00382">
    <property type="entry name" value="AAA"/>
    <property type="match status" value="1"/>
</dbReference>
<dbReference type="SUPFAM" id="SSF90123">
    <property type="entry name" value="ABC transporter transmembrane region"/>
    <property type="match status" value="1"/>
</dbReference>
<dbReference type="SUPFAM" id="SSF52540">
    <property type="entry name" value="P-loop containing nucleoside triphosphate hydrolases"/>
    <property type="match status" value="1"/>
</dbReference>
<dbReference type="PROSITE" id="PS50929">
    <property type="entry name" value="ABC_TM1F"/>
    <property type="match status" value="1"/>
</dbReference>
<dbReference type="PROSITE" id="PS00211">
    <property type="entry name" value="ABC_TRANSPORTER_1"/>
    <property type="match status" value="1"/>
</dbReference>
<dbReference type="PROSITE" id="PS50893">
    <property type="entry name" value="ABC_TRANSPORTER_2"/>
    <property type="match status" value="1"/>
</dbReference>
<name>YKNU_BACSU</name>
<proteinExistence type="inferred from homology"/>
<keyword id="KW-0067">ATP-binding</keyword>
<keyword id="KW-1003">Cell membrane</keyword>
<keyword id="KW-0472">Membrane</keyword>
<keyword id="KW-0547">Nucleotide-binding</keyword>
<keyword id="KW-1185">Reference proteome</keyword>
<keyword id="KW-0812">Transmembrane</keyword>
<keyword id="KW-1133">Transmembrane helix</keyword>
<keyword id="KW-0813">Transport</keyword>
<protein>
    <recommendedName>
        <fullName>Uncharacterized ABC transporter ATP-binding protein YknU</fullName>
    </recommendedName>
</protein>
<evidence type="ECO:0000250" key="1"/>
<evidence type="ECO:0000255" key="2">
    <source>
        <dbReference type="PROSITE-ProRule" id="PRU00434"/>
    </source>
</evidence>
<evidence type="ECO:0000255" key="3">
    <source>
        <dbReference type="PROSITE-ProRule" id="PRU00441"/>
    </source>
</evidence>
<evidence type="ECO:0000305" key="4"/>
<sequence>METFKRLKMYYWPYRKVFMWSLLAMLLMTAITVVYPIILQITIDEIVLGRQYQLAAWVSLGFIAVMVLKGMATFFHQYLGDMFGIKSVYRLRNGLYEKLQRLSFSYYDNAKTGDLMSRLTADVEGLRFFLSYGLAELIRFGLLVAISLSVMFYYSVPLTLVTIAVLPFLAVAVYRFDKRVHPAFRGIRKSFAKLNTKVQENISGINTVKSLSREDFQISTFNKANAEYRAQYLQTSSIWSAYFPLMEFIGNTCIVALLSYGGYLVMQNQLNPGELVAFFSLVNYMMWPIMNLGFVINMFSQAKASGERLLDILEKEEDITDHPHALHKQKLTGDVHFKNVSLAYGKEQTNALCNVSFEANSGKVIGLLGPTGSGKSSVTQLLTRFYSPVGGMITIDHKPITDYSLKTLRSNIGVVLQESFLFSSTIRSNISYGRPDASMEDVIEAAKRAQAHNFIMELPDGYDTMLGERGMGLSGGQKQRIAIARAICLNPSILILDDATSAVDMQTEHSIQLALKEVMKNRTTFIVAHRISSLKHADEILVFNKGRIRERGTHHELLEKGGYYKKIYDLQYRDVKMINEPHEVG</sequence>
<gene>
    <name type="primary">yknU</name>
    <name type="ordered locus">BSU14320</name>
</gene>
<comment type="subcellular location">
    <subcellularLocation>
        <location evidence="1">Cell membrane</location>
        <topology evidence="3">Multi-pass membrane protein</topology>
    </subcellularLocation>
</comment>
<comment type="similarity">
    <text evidence="4">Belongs to the ABC transporter superfamily.</text>
</comment>
<reference key="1">
    <citation type="submission" date="1997-07" db="EMBL/GenBank/DDBJ databases">
        <title>Sequence analysis of the mobA-ampS region of the Bacillus subtilis chromosome.</title>
        <authorList>
            <person name="Caldwell R.M."/>
            <person name="Ferrari E."/>
        </authorList>
    </citation>
    <scope>NUCLEOTIDE SEQUENCE [GENOMIC DNA]</scope>
    <source>
        <strain>168</strain>
    </source>
</reference>
<reference key="2">
    <citation type="journal article" date="1997" name="Nature">
        <title>The complete genome sequence of the Gram-positive bacterium Bacillus subtilis.</title>
        <authorList>
            <person name="Kunst F."/>
            <person name="Ogasawara N."/>
            <person name="Moszer I."/>
            <person name="Albertini A.M."/>
            <person name="Alloni G."/>
            <person name="Azevedo V."/>
            <person name="Bertero M.G."/>
            <person name="Bessieres P."/>
            <person name="Bolotin A."/>
            <person name="Borchert S."/>
            <person name="Borriss R."/>
            <person name="Boursier L."/>
            <person name="Brans A."/>
            <person name="Braun M."/>
            <person name="Brignell S.C."/>
            <person name="Bron S."/>
            <person name="Brouillet S."/>
            <person name="Bruschi C.V."/>
            <person name="Caldwell B."/>
            <person name="Capuano V."/>
            <person name="Carter N.M."/>
            <person name="Choi S.-K."/>
            <person name="Codani J.-J."/>
            <person name="Connerton I.F."/>
            <person name="Cummings N.J."/>
            <person name="Daniel R.A."/>
            <person name="Denizot F."/>
            <person name="Devine K.M."/>
            <person name="Duesterhoeft A."/>
            <person name="Ehrlich S.D."/>
            <person name="Emmerson P.T."/>
            <person name="Entian K.-D."/>
            <person name="Errington J."/>
            <person name="Fabret C."/>
            <person name="Ferrari E."/>
            <person name="Foulger D."/>
            <person name="Fritz C."/>
            <person name="Fujita M."/>
            <person name="Fujita Y."/>
            <person name="Fuma S."/>
            <person name="Galizzi A."/>
            <person name="Galleron N."/>
            <person name="Ghim S.-Y."/>
            <person name="Glaser P."/>
            <person name="Goffeau A."/>
            <person name="Golightly E.J."/>
            <person name="Grandi G."/>
            <person name="Guiseppi G."/>
            <person name="Guy B.J."/>
            <person name="Haga K."/>
            <person name="Haiech J."/>
            <person name="Harwood C.R."/>
            <person name="Henaut A."/>
            <person name="Hilbert H."/>
            <person name="Holsappel S."/>
            <person name="Hosono S."/>
            <person name="Hullo M.-F."/>
            <person name="Itaya M."/>
            <person name="Jones L.-M."/>
            <person name="Joris B."/>
            <person name="Karamata D."/>
            <person name="Kasahara Y."/>
            <person name="Klaerr-Blanchard M."/>
            <person name="Klein C."/>
            <person name="Kobayashi Y."/>
            <person name="Koetter P."/>
            <person name="Koningstein G."/>
            <person name="Krogh S."/>
            <person name="Kumano M."/>
            <person name="Kurita K."/>
            <person name="Lapidus A."/>
            <person name="Lardinois S."/>
            <person name="Lauber J."/>
            <person name="Lazarevic V."/>
            <person name="Lee S.-M."/>
            <person name="Levine A."/>
            <person name="Liu H."/>
            <person name="Masuda S."/>
            <person name="Mauel C."/>
            <person name="Medigue C."/>
            <person name="Medina N."/>
            <person name="Mellado R.P."/>
            <person name="Mizuno M."/>
            <person name="Moestl D."/>
            <person name="Nakai S."/>
            <person name="Noback M."/>
            <person name="Noone D."/>
            <person name="O'Reilly M."/>
            <person name="Ogawa K."/>
            <person name="Ogiwara A."/>
            <person name="Oudega B."/>
            <person name="Park S.-H."/>
            <person name="Parro V."/>
            <person name="Pohl T.M."/>
            <person name="Portetelle D."/>
            <person name="Porwollik S."/>
            <person name="Prescott A.M."/>
            <person name="Presecan E."/>
            <person name="Pujic P."/>
            <person name="Purnelle B."/>
            <person name="Rapoport G."/>
            <person name="Rey M."/>
            <person name="Reynolds S."/>
            <person name="Rieger M."/>
            <person name="Rivolta C."/>
            <person name="Rocha E."/>
            <person name="Roche B."/>
            <person name="Rose M."/>
            <person name="Sadaie Y."/>
            <person name="Sato T."/>
            <person name="Scanlan E."/>
            <person name="Schleich S."/>
            <person name="Schroeter R."/>
            <person name="Scoffone F."/>
            <person name="Sekiguchi J."/>
            <person name="Sekowska A."/>
            <person name="Seror S.J."/>
            <person name="Serror P."/>
            <person name="Shin B.-S."/>
            <person name="Soldo B."/>
            <person name="Sorokin A."/>
            <person name="Tacconi E."/>
            <person name="Takagi T."/>
            <person name="Takahashi H."/>
            <person name="Takemaru K."/>
            <person name="Takeuchi M."/>
            <person name="Tamakoshi A."/>
            <person name="Tanaka T."/>
            <person name="Terpstra P."/>
            <person name="Tognoni A."/>
            <person name="Tosato V."/>
            <person name="Uchiyama S."/>
            <person name="Vandenbol M."/>
            <person name="Vannier F."/>
            <person name="Vassarotti A."/>
            <person name="Viari A."/>
            <person name="Wambutt R."/>
            <person name="Wedler E."/>
            <person name="Wedler H."/>
            <person name="Weitzenegger T."/>
            <person name="Winters P."/>
            <person name="Wipat A."/>
            <person name="Yamamoto H."/>
            <person name="Yamane K."/>
            <person name="Yasumoto K."/>
            <person name="Yata K."/>
            <person name="Yoshida K."/>
            <person name="Yoshikawa H.-F."/>
            <person name="Zumstein E."/>
            <person name="Yoshikawa H."/>
            <person name="Danchin A."/>
        </authorList>
    </citation>
    <scope>NUCLEOTIDE SEQUENCE [LARGE SCALE GENOMIC DNA]</scope>
    <source>
        <strain>168</strain>
    </source>
</reference>